<evidence type="ECO:0000255" key="1">
    <source>
        <dbReference type="HAMAP-Rule" id="MF_01364"/>
    </source>
</evidence>
<evidence type="ECO:0000305" key="2"/>
<gene>
    <name evidence="1" type="primary">rpsZ</name>
    <name evidence="1" type="synonym">rpsN</name>
    <name type="ordered locus">BT0491</name>
</gene>
<dbReference type="EMBL" id="CP000049">
    <property type="protein sequence ID" value="AAX17819.1"/>
    <property type="molecule type" value="Genomic_DNA"/>
</dbReference>
<dbReference type="RefSeq" id="WP_011772438.1">
    <property type="nucleotide sequence ID" value="NZ_CP073176.1"/>
</dbReference>
<dbReference type="SMR" id="A1QZS7"/>
<dbReference type="KEGG" id="btu:BT0491"/>
<dbReference type="eggNOG" id="COG0199">
    <property type="taxonomic scope" value="Bacteria"/>
</dbReference>
<dbReference type="HOGENOM" id="CLU_139869_3_0_12"/>
<dbReference type="Proteomes" id="UP000001205">
    <property type="component" value="Chromosome"/>
</dbReference>
<dbReference type="GO" id="GO:0005737">
    <property type="term" value="C:cytoplasm"/>
    <property type="evidence" value="ECO:0007669"/>
    <property type="project" value="UniProtKB-ARBA"/>
</dbReference>
<dbReference type="GO" id="GO:0015935">
    <property type="term" value="C:small ribosomal subunit"/>
    <property type="evidence" value="ECO:0007669"/>
    <property type="project" value="TreeGrafter"/>
</dbReference>
<dbReference type="GO" id="GO:0019843">
    <property type="term" value="F:rRNA binding"/>
    <property type="evidence" value="ECO:0007669"/>
    <property type="project" value="UniProtKB-UniRule"/>
</dbReference>
<dbReference type="GO" id="GO:0003735">
    <property type="term" value="F:structural constituent of ribosome"/>
    <property type="evidence" value="ECO:0007669"/>
    <property type="project" value="InterPro"/>
</dbReference>
<dbReference type="GO" id="GO:0008270">
    <property type="term" value="F:zinc ion binding"/>
    <property type="evidence" value="ECO:0007669"/>
    <property type="project" value="UniProtKB-UniRule"/>
</dbReference>
<dbReference type="GO" id="GO:0006412">
    <property type="term" value="P:translation"/>
    <property type="evidence" value="ECO:0007669"/>
    <property type="project" value="UniProtKB-UniRule"/>
</dbReference>
<dbReference type="FunFam" id="4.10.830.10:FF:000001">
    <property type="entry name" value="30S ribosomal protein S14 type Z"/>
    <property type="match status" value="1"/>
</dbReference>
<dbReference type="Gene3D" id="4.10.830.10">
    <property type="entry name" value="30s Ribosomal Protein S14, Chain N"/>
    <property type="match status" value="1"/>
</dbReference>
<dbReference type="HAMAP" id="MF_01364_B">
    <property type="entry name" value="Ribosomal_uS14_2_B"/>
    <property type="match status" value="1"/>
</dbReference>
<dbReference type="InterPro" id="IPR001209">
    <property type="entry name" value="Ribosomal_uS14"/>
</dbReference>
<dbReference type="InterPro" id="IPR023053">
    <property type="entry name" value="Ribosomal_uS14_bact"/>
</dbReference>
<dbReference type="InterPro" id="IPR018271">
    <property type="entry name" value="Ribosomal_uS14_CS"/>
</dbReference>
<dbReference type="InterPro" id="IPR043140">
    <property type="entry name" value="Ribosomal_uS14_sf"/>
</dbReference>
<dbReference type="NCBIfam" id="NF005974">
    <property type="entry name" value="PRK08061.1"/>
    <property type="match status" value="1"/>
</dbReference>
<dbReference type="PANTHER" id="PTHR19836">
    <property type="entry name" value="30S RIBOSOMAL PROTEIN S14"/>
    <property type="match status" value="1"/>
</dbReference>
<dbReference type="PANTHER" id="PTHR19836:SF19">
    <property type="entry name" value="SMALL RIBOSOMAL SUBUNIT PROTEIN US14M"/>
    <property type="match status" value="1"/>
</dbReference>
<dbReference type="Pfam" id="PF00253">
    <property type="entry name" value="Ribosomal_S14"/>
    <property type="match status" value="1"/>
</dbReference>
<dbReference type="SUPFAM" id="SSF57716">
    <property type="entry name" value="Glucocorticoid receptor-like (DNA-binding domain)"/>
    <property type="match status" value="1"/>
</dbReference>
<dbReference type="PROSITE" id="PS00527">
    <property type="entry name" value="RIBOSOMAL_S14"/>
    <property type="match status" value="1"/>
</dbReference>
<comment type="function">
    <text evidence="1">Binds 16S rRNA, required for the assembly of 30S particles and may also be responsible for determining the conformation of the 16S rRNA at the A site.</text>
</comment>
<comment type="cofactor">
    <cofactor evidence="1">
        <name>Zn(2+)</name>
        <dbReference type="ChEBI" id="CHEBI:29105"/>
    </cofactor>
    <text evidence="1">Binds 1 zinc ion per subunit.</text>
</comment>
<comment type="subunit">
    <text evidence="1">Part of the 30S ribosomal subunit. Contacts proteins S3 and S10.</text>
</comment>
<comment type="similarity">
    <text evidence="1">Belongs to the universal ribosomal protein uS14 family. Zinc-binding uS14 subfamily.</text>
</comment>
<keyword id="KW-0479">Metal-binding</keyword>
<keyword id="KW-1185">Reference proteome</keyword>
<keyword id="KW-0687">Ribonucleoprotein</keyword>
<keyword id="KW-0689">Ribosomal protein</keyword>
<keyword id="KW-0694">RNA-binding</keyword>
<keyword id="KW-0699">rRNA-binding</keyword>
<keyword id="KW-0862">Zinc</keyword>
<reference key="1">
    <citation type="submission" date="2004-12" db="EMBL/GenBank/DDBJ databases">
        <title>The genome sequence of Borrelia hermsii and Borrelia turicatae: comparative analysis of two agents of endemic N. America relapsing fever.</title>
        <authorList>
            <person name="Porcella S.F."/>
            <person name="Raffel S.J."/>
            <person name="Schrumpf M.E."/>
            <person name="Montgomery B."/>
            <person name="Smith T."/>
            <person name="Schwan T.G."/>
        </authorList>
    </citation>
    <scope>NUCLEOTIDE SEQUENCE [LARGE SCALE GENOMIC DNA]</scope>
    <source>
        <strain>91E135</strain>
    </source>
</reference>
<organism>
    <name type="scientific">Borrelia turicatae (strain 91E135)</name>
    <dbReference type="NCBI Taxonomy" id="314724"/>
    <lineage>
        <taxon>Bacteria</taxon>
        <taxon>Pseudomonadati</taxon>
        <taxon>Spirochaetota</taxon>
        <taxon>Spirochaetia</taxon>
        <taxon>Spirochaetales</taxon>
        <taxon>Borreliaceae</taxon>
        <taxon>Borrelia</taxon>
    </lineage>
</organism>
<feature type="chain" id="PRO_1000166760" description="Small ribosomal subunit protein uS14">
    <location>
        <begin position="1"/>
        <end position="61"/>
    </location>
</feature>
<feature type="binding site" evidence="1">
    <location>
        <position position="24"/>
    </location>
    <ligand>
        <name>Zn(2+)</name>
        <dbReference type="ChEBI" id="CHEBI:29105"/>
    </ligand>
</feature>
<feature type="binding site" evidence="1">
    <location>
        <position position="27"/>
    </location>
    <ligand>
        <name>Zn(2+)</name>
        <dbReference type="ChEBI" id="CHEBI:29105"/>
    </ligand>
</feature>
<feature type="binding site" evidence="1">
    <location>
        <position position="40"/>
    </location>
    <ligand>
        <name>Zn(2+)</name>
        <dbReference type="ChEBI" id="CHEBI:29105"/>
    </ligand>
</feature>
<feature type="binding site" evidence="1">
    <location>
        <position position="43"/>
    </location>
    <ligand>
        <name>Zn(2+)</name>
        <dbReference type="ChEBI" id="CHEBI:29105"/>
    </ligand>
</feature>
<accession>A1QZS7</accession>
<sequence length="61" mass="7021">MAKKSMIVKALRKPKYKTRQKNRCKLCGRPKGYMRDFGMCRICFRNHASAGLIPGVSKSSW</sequence>
<proteinExistence type="inferred from homology"/>
<protein>
    <recommendedName>
        <fullName evidence="1">Small ribosomal subunit protein uS14</fullName>
    </recommendedName>
    <alternativeName>
        <fullName evidence="2">30S ribosomal protein S14 type Z</fullName>
    </alternativeName>
</protein>
<name>RS14Z_BORT9</name>